<protein>
    <recommendedName>
        <fullName evidence="1">Uroporphyrinogen decarboxylase</fullName>
        <shortName evidence="1">UPD</shortName>
        <shortName evidence="1">URO-D</shortName>
        <ecNumber evidence="1">4.1.1.37</ecNumber>
    </recommendedName>
</protein>
<organism>
    <name type="scientific">Francisella tularensis subsp. holarctica (strain OSU18)</name>
    <dbReference type="NCBI Taxonomy" id="393011"/>
    <lineage>
        <taxon>Bacteria</taxon>
        <taxon>Pseudomonadati</taxon>
        <taxon>Pseudomonadota</taxon>
        <taxon>Gammaproteobacteria</taxon>
        <taxon>Thiotrichales</taxon>
        <taxon>Francisellaceae</taxon>
        <taxon>Francisella</taxon>
    </lineage>
</organism>
<reference key="1">
    <citation type="journal article" date="2006" name="J. Bacteriol.">
        <title>Chromosome rearrangement and diversification of Francisella tularensis revealed by the type B (OSU18) genome sequence.</title>
        <authorList>
            <person name="Petrosino J.F."/>
            <person name="Xiang Q."/>
            <person name="Karpathy S.E."/>
            <person name="Jiang H."/>
            <person name="Yerrapragada S."/>
            <person name="Liu Y."/>
            <person name="Gioia J."/>
            <person name="Hemphill L."/>
            <person name="Gonzalez A."/>
            <person name="Raghavan T.M."/>
            <person name="Uzman A."/>
            <person name="Fox G.E."/>
            <person name="Highlander S."/>
            <person name="Reichard M."/>
            <person name="Morton R.J."/>
            <person name="Clinkenbeard K.D."/>
            <person name="Weinstock G.M."/>
        </authorList>
    </citation>
    <scope>NUCLEOTIDE SEQUENCE [LARGE SCALE GENOMIC DNA]</scope>
    <source>
        <strain>OSU18</strain>
    </source>
</reference>
<keyword id="KW-0963">Cytoplasm</keyword>
<keyword id="KW-0210">Decarboxylase</keyword>
<keyword id="KW-0456">Lyase</keyword>
<keyword id="KW-0627">Porphyrin biosynthesis</keyword>
<sequence length="344" mass="38873">MRKLFLDAFGEKKLDKPPVWIMRQAGRYLPEYRAVRVKFDNFMDMCRNADACCEVALHPLQRYDLDAAIVFSDILTIPEAMGMDLKFIKGAGPVFSEPIQSQKDLDKLKSIEDSIGSLDYVYNAVKTTSSAINVPLIGFTGSPWTLAAYMIEGSGSKQFNKLRKMMYANPQLMHSLLQRLADITIIYLLEQVKAGASSVMIFDTWGGILPLEHYKNFSLKYMEYIAKNVKQKINIPIVFFTKGGSNFFEEIKDKSCDGVGVDWSVTLKQARHRIGVGKVLQGNFDPAFLYGSKQSIRETVRANIEFIQSDKLNNYIVNLGHGIYPDIDPDSVRVMIDAIREFSA</sequence>
<comment type="function">
    <text evidence="1">Catalyzes the decarboxylation of four acetate groups of uroporphyrinogen-III to yield coproporphyrinogen-III.</text>
</comment>
<comment type="catalytic activity">
    <reaction evidence="1">
        <text>uroporphyrinogen III + 4 H(+) = coproporphyrinogen III + 4 CO2</text>
        <dbReference type="Rhea" id="RHEA:19865"/>
        <dbReference type="ChEBI" id="CHEBI:15378"/>
        <dbReference type="ChEBI" id="CHEBI:16526"/>
        <dbReference type="ChEBI" id="CHEBI:57308"/>
        <dbReference type="ChEBI" id="CHEBI:57309"/>
        <dbReference type="EC" id="4.1.1.37"/>
    </reaction>
</comment>
<comment type="pathway">
    <text evidence="1">Porphyrin-containing compound metabolism; protoporphyrin-IX biosynthesis; coproporphyrinogen-III from 5-aminolevulinate: step 4/4.</text>
</comment>
<comment type="subunit">
    <text evidence="1">Homodimer.</text>
</comment>
<comment type="subcellular location">
    <subcellularLocation>
        <location evidence="1">Cytoplasm</location>
    </subcellularLocation>
</comment>
<comment type="similarity">
    <text evidence="1">Belongs to the uroporphyrinogen decarboxylase family.</text>
</comment>
<proteinExistence type="inferred from homology"/>
<dbReference type="EC" id="4.1.1.37" evidence="1"/>
<dbReference type="EMBL" id="CP000437">
    <property type="protein sequence ID" value="ABI83517.1"/>
    <property type="molecule type" value="Genomic_DNA"/>
</dbReference>
<dbReference type="RefSeq" id="WP_003017361.1">
    <property type="nucleotide sequence ID" value="NC_017463.1"/>
</dbReference>
<dbReference type="SMR" id="Q0BK67"/>
<dbReference type="KEGG" id="fth:FTH_1749"/>
<dbReference type="UniPathway" id="UPA00251">
    <property type="reaction ID" value="UER00321"/>
</dbReference>
<dbReference type="GO" id="GO:0005829">
    <property type="term" value="C:cytosol"/>
    <property type="evidence" value="ECO:0007669"/>
    <property type="project" value="TreeGrafter"/>
</dbReference>
<dbReference type="GO" id="GO:0004853">
    <property type="term" value="F:uroporphyrinogen decarboxylase activity"/>
    <property type="evidence" value="ECO:0007669"/>
    <property type="project" value="UniProtKB-UniRule"/>
</dbReference>
<dbReference type="GO" id="GO:0006782">
    <property type="term" value="P:protoporphyrinogen IX biosynthetic process"/>
    <property type="evidence" value="ECO:0007669"/>
    <property type="project" value="UniProtKB-UniRule"/>
</dbReference>
<dbReference type="CDD" id="cd00717">
    <property type="entry name" value="URO-D"/>
    <property type="match status" value="1"/>
</dbReference>
<dbReference type="FunFam" id="3.20.20.210:FF:000008">
    <property type="entry name" value="Uroporphyrinogen decarboxylase"/>
    <property type="match status" value="1"/>
</dbReference>
<dbReference type="Gene3D" id="3.20.20.210">
    <property type="match status" value="1"/>
</dbReference>
<dbReference type="HAMAP" id="MF_00218">
    <property type="entry name" value="URO_D"/>
    <property type="match status" value="1"/>
</dbReference>
<dbReference type="InterPro" id="IPR038071">
    <property type="entry name" value="UROD/MetE-like_sf"/>
</dbReference>
<dbReference type="InterPro" id="IPR006361">
    <property type="entry name" value="Uroporphyrinogen_deCO2ase_HemE"/>
</dbReference>
<dbReference type="InterPro" id="IPR000257">
    <property type="entry name" value="Uroporphyrinogen_deCOase"/>
</dbReference>
<dbReference type="NCBIfam" id="TIGR01464">
    <property type="entry name" value="hemE"/>
    <property type="match status" value="1"/>
</dbReference>
<dbReference type="PANTHER" id="PTHR21091">
    <property type="entry name" value="METHYLTETRAHYDROFOLATE:HOMOCYSTEINE METHYLTRANSFERASE RELATED"/>
    <property type="match status" value="1"/>
</dbReference>
<dbReference type="PANTHER" id="PTHR21091:SF169">
    <property type="entry name" value="UROPORPHYRINOGEN DECARBOXYLASE"/>
    <property type="match status" value="1"/>
</dbReference>
<dbReference type="Pfam" id="PF01208">
    <property type="entry name" value="URO-D"/>
    <property type="match status" value="1"/>
</dbReference>
<dbReference type="SUPFAM" id="SSF51726">
    <property type="entry name" value="UROD/MetE-like"/>
    <property type="match status" value="1"/>
</dbReference>
<dbReference type="PROSITE" id="PS00906">
    <property type="entry name" value="UROD_1"/>
    <property type="match status" value="1"/>
</dbReference>
<dbReference type="PROSITE" id="PS00907">
    <property type="entry name" value="UROD_2"/>
    <property type="match status" value="1"/>
</dbReference>
<name>DCUP_FRATO</name>
<evidence type="ECO:0000255" key="1">
    <source>
        <dbReference type="HAMAP-Rule" id="MF_00218"/>
    </source>
</evidence>
<feature type="chain" id="PRO_0000325641" description="Uroporphyrinogen decarboxylase">
    <location>
        <begin position="1"/>
        <end position="344"/>
    </location>
</feature>
<feature type="binding site" evidence="1">
    <location>
        <begin position="23"/>
        <end position="27"/>
    </location>
    <ligand>
        <name>substrate</name>
    </ligand>
</feature>
<feature type="binding site" evidence="1">
    <location>
        <position position="73"/>
    </location>
    <ligand>
        <name>substrate</name>
    </ligand>
</feature>
<feature type="binding site" evidence="1">
    <location>
        <position position="149"/>
    </location>
    <ligand>
        <name>substrate</name>
    </ligand>
</feature>
<feature type="binding site" evidence="1">
    <location>
        <position position="204"/>
    </location>
    <ligand>
        <name>substrate</name>
    </ligand>
</feature>
<feature type="binding site" evidence="1">
    <location>
        <position position="321"/>
    </location>
    <ligand>
        <name>substrate</name>
    </ligand>
</feature>
<feature type="site" description="Transition state stabilizer" evidence="1">
    <location>
        <position position="73"/>
    </location>
</feature>
<accession>Q0BK67</accession>
<gene>
    <name evidence="1" type="primary">hemE</name>
    <name type="ordered locus">FTH_1749</name>
</gene>